<gene>
    <name evidence="1" type="primary">ribK</name>
    <name type="ordered locus">Msm_1257</name>
</gene>
<feature type="chain" id="PRO_0000322069" description="Riboflavin kinase">
    <location>
        <begin position="1"/>
        <end position="124"/>
    </location>
</feature>
<feature type="binding site" evidence="1">
    <location>
        <begin position="10"/>
        <end position="15"/>
    </location>
    <ligand>
        <name>CDP</name>
        <dbReference type="ChEBI" id="CHEBI:58069"/>
    </ligand>
</feature>
<feature type="binding site" evidence="1">
    <location>
        <position position="39"/>
    </location>
    <ligand>
        <name>Mg(2+)</name>
        <dbReference type="ChEBI" id="CHEBI:18420"/>
    </ligand>
</feature>
<feature type="binding site" evidence="1">
    <location>
        <position position="41"/>
    </location>
    <ligand>
        <name>Mg(2+)</name>
        <dbReference type="ChEBI" id="CHEBI:18420"/>
    </ligand>
</feature>
<feature type="binding site" evidence="1">
    <location>
        <position position="93"/>
    </location>
    <ligand>
        <name>FMN</name>
        <dbReference type="ChEBI" id="CHEBI:58210"/>
    </ligand>
</feature>
<feature type="binding site" evidence="1">
    <location>
        <position position="101"/>
    </location>
    <ligand>
        <name>FMN</name>
        <dbReference type="ChEBI" id="CHEBI:58210"/>
    </ligand>
</feature>
<feature type="binding site" evidence="1">
    <location>
        <begin position="106"/>
        <end position="109"/>
    </location>
    <ligand>
        <name>CDP</name>
        <dbReference type="ChEBI" id="CHEBI:58069"/>
    </ligand>
</feature>
<reference key="1">
    <citation type="journal article" date="2007" name="Proc. Natl. Acad. Sci. U.S.A.">
        <title>Genomic and metabolic adaptations of Methanobrevibacter smithii to the human gut.</title>
        <authorList>
            <person name="Samuel B.S."/>
            <person name="Hansen E.E."/>
            <person name="Manchester J.K."/>
            <person name="Coutinho P.M."/>
            <person name="Henrissat B."/>
            <person name="Fulton R."/>
            <person name="Latreille P."/>
            <person name="Kim K."/>
            <person name="Wilson R.K."/>
            <person name="Gordon J.I."/>
        </authorList>
    </citation>
    <scope>NUCLEOTIDE SEQUENCE [LARGE SCALE GENOMIC DNA]</scope>
    <source>
        <strain>ATCC 35061 / DSM 861 / OCM 144 / PS</strain>
    </source>
</reference>
<keyword id="KW-0285">Flavoprotein</keyword>
<keyword id="KW-0288">FMN</keyword>
<keyword id="KW-0418">Kinase</keyword>
<keyword id="KW-0460">Magnesium</keyword>
<keyword id="KW-0479">Metal-binding</keyword>
<keyword id="KW-0547">Nucleotide-binding</keyword>
<keyword id="KW-0808">Transferase</keyword>
<name>RIFK_METS3</name>
<accession>A5UMN4</accession>
<comment type="function">
    <text evidence="1">Catalyzes the CTP-dependent phosphorylation of riboflavin (vitamin B2) to form flavin mononucleotide (FMN).</text>
</comment>
<comment type="catalytic activity">
    <reaction evidence="1">
        <text>riboflavin + CTP = CDP + FMN + H(+)</text>
        <dbReference type="Rhea" id="RHEA:25021"/>
        <dbReference type="ChEBI" id="CHEBI:15378"/>
        <dbReference type="ChEBI" id="CHEBI:37563"/>
        <dbReference type="ChEBI" id="CHEBI:57986"/>
        <dbReference type="ChEBI" id="CHEBI:58069"/>
        <dbReference type="ChEBI" id="CHEBI:58210"/>
        <dbReference type="EC" id="2.7.1.161"/>
    </reaction>
</comment>
<comment type="cofactor">
    <cofactor evidence="1">
        <name>Mg(2+)</name>
        <dbReference type="ChEBI" id="CHEBI:18420"/>
    </cofactor>
    <text evidence="1">Binds 1 Mg(2+) ion per subunit.</text>
</comment>
<comment type="pathway">
    <text evidence="1">Cofactor biosynthesis; FMN biosynthesis; FMN from riboflavin (CTP route): step 1/1.</text>
</comment>
<comment type="similarity">
    <text evidence="1">Belongs to the archaeal riboflavin kinase family.</text>
</comment>
<sequence length="124" mass="14013">MKIDGTVTTGLGKAAYFLSQDFYVNNFKKNCGFRPYPGTLNVIVPEEYLPQINKVKNECKNIIKPDEGFGAVKYIKARLNDEVTGAIVFPAKTTHEENYLEFIAKDKLRDKLNLEDGDTVSVEF</sequence>
<evidence type="ECO:0000255" key="1">
    <source>
        <dbReference type="HAMAP-Rule" id="MF_01285"/>
    </source>
</evidence>
<organism>
    <name type="scientific">Methanobrevibacter smithii (strain ATCC 35061 / DSM 861 / OCM 144 / PS)</name>
    <dbReference type="NCBI Taxonomy" id="420247"/>
    <lineage>
        <taxon>Archaea</taxon>
        <taxon>Methanobacteriati</taxon>
        <taxon>Methanobacteriota</taxon>
        <taxon>Methanomada group</taxon>
        <taxon>Methanobacteria</taxon>
        <taxon>Methanobacteriales</taxon>
        <taxon>Methanobacteriaceae</taxon>
        <taxon>Methanobrevibacter</taxon>
    </lineage>
</organism>
<protein>
    <recommendedName>
        <fullName evidence="1">Riboflavin kinase</fullName>
        <shortName evidence="1">RFK</shortName>
        <ecNumber evidence="1">2.7.1.161</ecNumber>
    </recommendedName>
    <alternativeName>
        <fullName evidence="1">CTP-dependent riboflavin kinase</fullName>
    </alternativeName>
    <alternativeName>
        <fullName evidence="1">CTP:riboflavin 5'-phosphotransferase</fullName>
    </alternativeName>
    <alternativeName>
        <fullName evidence="1">Flavokinase</fullName>
    </alternativeName>
</protein>
<dbReference type="EC" id="2.7.1.161" evidence="1"/>
<dbReference type="EMBL" id="CP000678">
    <property type="protein sequence ID" value="ABQ87462.1"/>
    <property type="molecule type" value="Genomic_DNA"/>
</dbReference>
<dbReference type="RefSeq" id="WP_004032664.1">
    <property type="nucleotide sequence ID" value="NZ_CP117965.1"/>
</dbReference>
<dbReference type="SMR" id="A5UMN4"/>
<dbReference type="STRING" id="420247.Msm_1257"/>
<dbReference type="EnsemblBacteria" id="ABQ87462">
    <property type="protein sequence ID" value="ABQ87462"/>
    <property type="gene ID" value="Msm_1257"/>
</dbReference>
<dbReference type="KEGG" id="msi:Msm_1257"/>
<dbReference type="PATRIC" id="fig|420247.28.peg.1255"/>
<dbReference type="eggNOG" id="arCOG01904">
    <property type="taxonomic scope" value="Archaea"/>
</dbReference>
<dbReference type="HOGENOM" id="CLU_140165_0_0_2"/>
<dbReference type="UniPathway" id="UPA00276">
    <property type="reaction ID" value="UER00929"/>
</dbReference>
<dbReference type="Proteomes" id="UP000001992">
    <property type="component" value="Chromosome"/>
</dbReference>
<dbReference type="GO" id="GO:0000287">
    <property type="term" value="F:magnesium ion binding"/>
    <property type="evidence" value="ECO:0007669"/>
    <property type="project" value="UniProtKB-UniRule"/>
</dbReference>
<dbReference type="GO" id="GO:0000166">
    <property type="term" value="F:nucleotide binding"/>
    <property type="evidence" value="ECO:0007669"/>
    <property type="project" value="UniProtKB-UniRule"/>
</dbReference>
<dbReference type="GO" id="GO:0008531">
    <property type="term" value="F:riboflavin kinase activity"/>
    <property type="evidence" value="ECO:0007669"/>
    <property type="project" value="InterPro"/>
</dbReference>
<dbReference type="GO" id="GO:0009398">
    <property type="term" value="P:FMN biosynthetic process"/>
    <property type="evidence" value="ECO:0007669"/>
    <property type="project" value="UniProtKB-UniRule"/>
</dbReference>
<dbReference type="GO" id="GO:0009231">
    <property type="term" value="P:riboflavin biosynthetic process"/>
    <property type="evidence" value="ECO:0007669"/>
    <property type="project" value="InterPro"/>
</dbReference>
<dbReference type="Gene3D" id="2.40.30.30">
    <property type="entry name" value="Riboflavin kinase-like"/>
    <property type="match status" value="1"/>
</dbReference>
<dbReference type="HAMAP" id="MF_01285">
    <property type="entry name" value="Riboflavin_kinase"/>
    <property type="match status" value="1"/>
</dbReference>
<dbReference type="InterPro" id="IPR039063">
    <property type="entry name" value="RibK_CTP-dep"/>
</dbReference>
<dbReference type="InterPro" id="IPR023470">
    <property type="entry name" value="Riboflavin_kinase_archaeal"/>
</dbReference>
<dbReference type="InterPro" id="IPR023602">
    <property type="entry name" value="Riboflavin_kinase_CTP-dep"/>
</dbReference>
<dbReference type="InterPro" id="IPR023465">
    <property type="entry name" value="Riboflavin_kinase_dom_sf"/>
</dbReference>
<dbReference type="PANTHER" id="PTHR40706">
    <property type="entry name" value="RIBOFLAVIN KINASE"/>
    <property type="match status" value="1"/>
</dbReference>
<dbReference type="PANTHER" id="PTHR40706:SF1">
    <property type="entry name" value="RIBOFLAVIN KINASE"/>
    <property type="match status" value="1"/>
</dbReference>
<dbReference type="Pfam" id="PF01982">
    <property type="entry name" value="CTP-dep_RFKase"/>
    <property type="match status" value="1"/>
</dbReference>
<dbReference type="SUPFAM" id="SSF82114">
    <property type="entry name" value="Riboflavin kinase-like"/>
    <property type="match status" value="1"/>
</dbReference>
<proteinExistence type="inferred from homology"/>